<accession>Q09401</accession>
<dbReference type="EMBL" id="FO080416">
    <property type="protein sequence ID" value="CCD63537.1"/>
    <property type="molecule type" value="Genomic_DNA"/>
</dbReference>
<dbReference type="RefSeq" id="NP_495554.2">
    <property type="nucleotide sequence ID" value="NM_063153.4"/>
</dbReference>
<dbReference type="FunCoup" id="Q09401">
    <property type="interactions" value="1592"/>
</dbReference>
<dbReference type="PaxDb" id="6239-K02A2.5"/>
<dbReference type="EnsemblMetazoa" id="K02A2.5.1">
    <property type="protein sequence ID" value="K02A2.5.1"/>
    <property type="gene ID" value="WBGene00019290"/>
</dbReference>
<dbReference type="GeneID" id="186857"/>
<dbReference type="KEGG" id="cel:CELE_K02A2.5"/>
<dbReference type="UCSC" id="K02A2.5">
    <property type="organism name" value="c. elegans"/>
</dbReference>
<dbReference type="AGR" id="WB:WBGene00019290"/>
<dbReference type="CTD" id="186857"/>
<dbReference type="WormBase" id="K02A2.5">
    <property type="protein sequence ID" value="CE32056"/>
    <property type="gene ID" value="WBGene00019290"/>
</dbReference>
<dbReference type="eggNOG" id="ENOG502TI4T">
    <property type="taxonomic scope" value="Eukaryota"/>
</dbReference>
<dbReference type="HOGENOM" id="CLU_189373_0_0_1"/>
<dbReference type="InParanoid" id="Q09401"/>
<dbReference type="OMA" id="EHLRIWI"/>
<dbReference type="OrthoDB" id="5839783at2759"/>
<dbReference type="PRO" id="PR:Q09401"/>
<dbReference type="Proteomes" id="UP000001940">
    <property type="component" value="Chromosome II"/>
</dbReference>
<dbReference type="Bgee" id="WBGene00019290">
    <property type="expression patterns" value="Expressed in larva and 3 other cell types or tissues"/>
</dbReference>
<sequence length="91" mass="10324">MLLQRIGIEHLRIWILLLLISLVPAALIRDRRRTSDDFSLFSYDYDDKADAHDADAAFRKFEALCSARSQQPSTSKPSLIDALCTSALKKE</sequence>
<reference key="1">
    <citation type="journal article" date="1998" name="Science">
        <title>Genome sequence of the nematode C. elegans: a platform for investigating biology.</title>
        <authorList>
            <consortium name="The C. elegans sequencing consortium"/>
        </authorList>
    </citation>
    <scope>NUCLEOTIDE SEQUENCE [LARGE SCALE GENOMIC DNA]</scope>
    <source>
        <strain>Bristol N2</strain>
    </source>
</reference>
<evidence type="ECO:0000255" key="1"/>
<proteinExistence type="inferred from homology"/>
<name>YRD5_CAEEL</name>
<protein>
    <recommendedName>
        <fullName>Uncharacterized protein K02A2.5</fullName>
    </recommendedName>
</protein>
<organism>
    <name type="scientific">Caenorhabditis elegans</name>
    <dbReference type="NCBI Taxonomy" id="6239"/>
    <lineage>
        <taxon>Eukaryota</taxon>
        <taxon>Metazoa</taxon>
        <taxon>Ecdysozoa</taxon>
        <taxon>Nematoda</taxon>
        <taxon>Chromadorea</taxon>
        <taxon>Rhabditida</taxon>
        <taxon>Rhabditina</taxon>
        <taxon>Rhabditomorpha</taxon>
        <taxon>Rhabditoidea</taxon>
        <taxon>Rhabditidae</taxon>
        <taxon>Peloderinae</taxon>
        <taxon>Caenorhabditis</taxon>
    </lineage>
</organism>
<keyword id="KW-1185">Reference proteome</keyword>
<keyword id="KW-0732">Signal</keyword>
<gene>
    <name type="ORF">K02A2.5</name>
</gene>
<feature type="signal peptide" evidence="1">
    <location>
        <begin position="1"/>
        <end position="25"/>
    </location>
</feature>
<feature type="chain" id="PRO_0000014289" description="Uncharacterized protein K02A2.5">
    <location>
        <begin position="26"/>
        <end position="91"/>
    </location>
</feature>